<proteinExistence type="inferred from homology"/>
<dbReference type="EMBL" id="AE017220">
    <property type="protein sequence ID" value="AAX66592.1"/>
    <property type="molecule type" value="Genomic_DNA"/>
</dbReference>
<dbReference type="RefSeq" id="WP_001112990.1">
    <property type="nucleotide sequence ID" value="NC_006905.1"/>
</dbReference>
<dbReference type="SMR" id="Q57L20"/>
<dbReference type="KEGG" id="sec:SCH_2686"/>
<dbReference type="HOGENOM" id="CLU_150721_1_0_6"/>
<dbReference type="Proteomes" id="UP000000538">
    <property type="component" value="Chromosome"/>
</dbReference>
<dbReference type="Gene3D" id="3.10.20.280">
    <property type="entry name" value="RnfH-like"/>
    <property type="match status" value="1"/>
</dbReference>
<dbReference type="HAMAP" id="MF_00460">
    <property type="entry name" value="UPF0125_RnfH"/>
    <property type="match status" value="1"/>
</dbReference>
<dbReference type="InterPro" id="IPR016155">
    <property type="entry name" value="Mopterin_synth/thiamin_S_b"/>
</dbReference>
<dbReference type="InterPro" id="IPR005346">
    <property type="entry name" value="RnfH"/>
</dbReference>
<dbReference type="InterPro" id="IPR037021">
    <property type="entry name" value="RnfH_sf"/>
</dbReference>
<dbReference type="NCBIfam" id="NF002490">
    <property type="entry name" value="PRK01777.1"/>
    <property type="match status" value="1"/>
</dbReference>
<dbReference type="PANTHER" id="PTHR37483">
    <property type="entry name" value="UPF0125 PROTEIN RATB"/>
    <property type="match status" value="1"/>
</dbReference>
<dbReference type="PANTHER" id="PTHR37483:SF1">
    <property type="entry name" value="UPF0125 PROTEIN RATB"/>
    <property type="match status" value="1"/>
</dbReference>
<dbReference type="Pfam" id="PF03658">
    <property type="entry name" value="Ub-RnfH"/>
    <property type="match status" value="1"/>
</dbReference>
<dbReference type="SUPFAM" id="SSF54285">
    <property type="entry name" value="MoaD/ThiS"/>
    <property type="match status" value="1"/>
</dbReference>
<evidence type="ECO:0000255" key="1">
    <source>
        <dbReference type="HAMAP-Rule" id="MF_00460"/>
    </source>
</evidence>
<gene>
    <name evidence="1" type="primary">rnfH</name>
    <name type="ordered locus">SCH_2686</name>
</gene>
<accession>Q57L20</accession>
<sequence length="96" mass="10806">MPDKLVVEVAYALPEKQYLQRVTLEEGATVEEAIRASGLLELRTDIDLAKNKVGIYSRPVKLTDTVQDGDRVEIYRPLIADPKALRRQRAEKSAGR</sequence>
<protein>
    <recommendedName>
        <fullName evidence="1">Protein RnfH</fullName>
    </recommendedName>
</protein>
<comment type="similarity">
    <text evidence="1">Belongs to the UPF0125 (RnfH) family.</text>
</comment>
<organism>
    <name type="scientific">Salmonella choleraesuis (strain SC-B67)</name>
    <dbReference type="NCBI Taxonomy" id="321314"/>
    <lineage>
        <taxon>Bacteria</taxon>
        <taxon>Pseudomonadati</taxon>
        <taxon>Pseudomonadota</taxon>
        <taxon>Gammaproteobacteria</taxon>
        <taxon>Enterobacterales</taxon>
        <taxon>Enterobacteriaceae</taxon>
        <taxon>Salmonella</taxon>
    </lineage>
</organism>
<reference key="1">
    <citation type="journal article" date="2005" name="Nucleic Acids Res.">
        <title>The genome sequence of Salmonella enterica serovar Choleraesuis, a highly invasive and resistant zoonotic pathogen.</title>
        <authorList>
            <person name="Chiu C.-H."/>
            <person name="Tang P."/>
            <person name="Chu C."/>
            <person name="Hu S."/>
            <person name="Bao Q."/>
            <person name="Yu J."/>
            <person name="Chou Y.-Y."/>
            <person name="Wang H.-S."/>
            <person name="Lee Y.-S."/>
        </authorList>
    </citation>
    <scope>NUCLEOTIDE SEQUENCE [LARGE SCALE GENOMIC DNA]</scope>
    <source>
        <strain>SC-B67</strain>
    </source>
</reference>
<name>RNFH_SALCH</name>
<feature type="chain" id="PRO_1000013594" description="Protein RnfH">
    <location>
        <begin position="1"/>
        <end position="96"/>
    </location>
</feature>